<evidence type="ECO:0000255" key="1">
    <source>
        <dbReference type="HAMAP-Rule" id="MF_00279"/>
    </source>
</evidence>
<keyword id="KW-0963">Cytoplasm</keyword>
<keyword id="KW-0664">Pyridoxine biosynthesis</keyword>
<keyword id="KW-0808">Transferase</keyword>
<name>PDXJ_RHOPT</name>
<proteinExistence type="inferred from homology"/>
<accession>B3QJH1</accession>
<gene>
    <name evidence="1" type="primary">pdxJ</name>
    <name type="ordered locus">Rpal_2969</name>
</gene>
<sequence length="254" mass="27054">MSKAPPLRLGVNIDHIATLRNARGGRHPDPLRAAFAAIEAGADGITAHLREDRRHIRDADMQRLKAEISKPLNFEMAATDDMIRIALGVKPHAVCLVPERREELTTEGGLDVVGQQASLGPAIARFNDAGIRTSLFIAADPAQIETAAKLKAPAIEIHTGAWCDAITDGDAAKANTEWQRIFAGAALARSAGLEVHAGHGLDYATAETISELPQIVELNIGFHMIGEALFVGLGETVRAMRAAMDRGRAKAIAA</sequence>
<feature type="chain" id="PRO_1000114827" description="Pyridoxine 5'-phosphate synthase">
    <location>
        <begin position="1"/>
        <end position="254"/>
    </location>
</feature>
<feature type="active site" description="Proton acceptor" evidence="1">
    <location>
        <position position="48"/>
    </location>
</feature>
<feature type="active site" description="Proton acceptor" evidence="1">
    <location>
        <position position="75"/>
    </location>
</feature>
<feature type="active site" description="Proton donor" evidence="1">
    <location>
        <position position="199"/>
    </location>
</feature>
<feature type="binding site" evidence="1">
    <location>
        <position position="12"/>
    </location>
    <ligand>
        <name>3-amino-2-oxopropyl phosphate</name>
        <dbReference type="ChEBI" id="CHEBI:57279"/>
    </ligand>
</feature>
<feature type="binding site" evidence="1">
    <location>
        <begin position="14"/>
        <end position="15"/>
    </location>
    <ligand>
        <name>1-deoxy-D-xylulose 5-phosphate</name>
        <dbReference type="ChEBI" id="CHEBI:57792"/>
    </ligand>
</feature>
<feature type="binding site" evidence="1">
    <location>
        <position position="23"/>
    </location>
    <ligand>
        <name>3-amino-2-oxopropyl phosphate</name>
        <dbReference type="ChEBI" id="CHEBI:57279"/>
    </ligand>
</feature>
<feature type="binding site" evidence="1">
    <location>
        <position position="50"/>
    </location>
    <ligand>
        <name>1-deoxy-D-xylulose 5-phosphate</name>
        <dbReference type="ChEBI" id="CHEBI:57792"/>
    </ligand>
</feature>
<feature type="binding site" evidence="1">
    <location>
        <position position="55"/>
    </location>
    <ligand>
        <name>1-deoxy-D-xylulose 5-phosphate</name>
        <dbReference type="ChEBI" id="CHEBI:57792"/>
    </ligand>
</feature>
<feature type="binding site" evidence="1">
    <location>
        <position position="105"/>
    </location>
    <ligand>
        <name>1-deoxy-D-xylulose 5-phosphate</name>
        <dbReference type="ChEBI" id="CHEBI:57792"/>
    </ligand>
</feature>
<feature type="binding site" evidence="1">
    <location>
        <position position="200"/>
    </location>
    <ligand>
        <name>3-amino-2-oxopropyl phosphate</name>
        <dbReference type="ChEBI" id="CHEBI:57279"/>
    </ligand>
</feature>
<feature type="binding site" evidence="1">
    <location>
        <begin position="221"/>
        <end position="222"/>
    </location>
    <ligand>
        <name>3-amino-2-oxopropyl phosphate</name>
        <dbReference type="ChEBI" id="CHEBI:57279"/>
    </ligand>
</feature>
<feature type="site" description="Transition state stabilizer" evidence="1">
    <location>
        <position position="156"/>
    </location>
</feature>
<reference key="1">
    <citation type="submission" date="2008-05" db="EMBL/GenBank/DDBJ databases">
        <title>Complete sequence of Rhodopseudomonas palustris TIE-1.</title>
        <authorList>
            <consortium name="US DOE Joint Genome Institute"/>
            <person name="Lucas S."/>
            <person name="Copeland A."/>
            <person name="Lapidus A."/>
            <person name="Glavina del Rio T."/>
            <person name="Dalin E."/>
            <person name="Tice H."/>
            <person name="Pitluck S."/>
            <person name="Chain P."/>
            <person name="Malfatti S."/>
            <person name="Shin M."/>
            <person name="Vergez L."/>
            <person name="Lang D."/>
            <person name="Schmutz J."/>
            <person name="Larimer F."/>
            <person name="Land M."/>
            <person name="Hauser L."/>
            <person name="Kyrpides N."/>
            <person name="Mikhailova N."/>
            <person name="Emerson D."/>
            <person name="Newman D.K."/>
            <person name="Roden E."/>
            <person name="Richardson P."/>
        </authorList>
    </citation>
    <scope>NUCLEOTIDE SEQUENCE [LARGE SCALE GENOMIC DNA]</scope>
    <source>
        <strain>TIE-1</strain>
    </source>
</reference>
<dbReference type="EC" id="2.6.99.2" evidence="1"/>
<dbReference type="EMBL" id="CP001096">
    <property type="protein sequence ID" value="ACF01477.1"/>
    <property type="molecule type" value="Genomic_DNA"/>
</dbReference>
<dbReference type="RefSeq" id="WP_012496119.1">
    <property type="nucleotide sequence ID" value="NC_011004.1"/>
</dbReference>
<dbReference type="SMR" id="B3QJH1"/>
<dbReference type="KEGG" id="rpt:Rpal_2969"/>
<dbReference type="HOGENOM" id="CLU_074563_0_0_5"/>
<dbReference type="OrthoDB" id="9806590at2"/>
<dbReference type="UniPathway" id="UPA00244">
    <property type="reaction ID" value="UER00313"/>
</dbReference>
<dbReference type="Proteomes" id="UP000001725">
    <property type="component" value="Chromosome"/>
</dbReference>
<dbReference type="GO" id="GO:0005829">
    <property type="term" value="C:cytosol"/>
    <property type="evidence" value="ECO:0007669"/>
    <property type="project" value="TreeGrafter"/>
</dbReference>
<dbReference type="GO" id="GO:0033856">
    <property type="term" value="F:pyridoxine 5'-phosphate synthase activity"/>
    <property type="evidence" value="ECO:0007669"/>
    <property type="project" value="UniProtKB-EC"/>
</dbReference>
<dbReference type="GO" id="GO:0008615">
    <property type="term" value="P:pyridoxine biosynthetic process"/>
    <property type="evidence" value="ECO:0007669"/>
    <property type="project" value="UniProtKB-UniRule"/>
</dbReference>
<dbReference type="CDD" id="cd00003">
    <property type="entry name" value="PNPsynthase"/>
    <property type="match status" value="1"/>
</dbReference>
<dbReference type="Gene3D" id="3.20.20.70">
    <property type="entry name" value="Aldolase class I"/>
    <property type="match status" value="1"/>
</dbReference>
<dbReference type="HAMAP" id="MF_00279">
    <property type="entry name" value="PdxJ"/>
    <property type="match status" value="1"/>
</dbReference>
<dbReference type="InterPro" id="IPR013785">
    <property type="entry name" value="Aldolase_TIM"/>
</dbReference>
<dbReference type="InterPro" id="IPR004569">
    <property type="entry name" value="PyrdxlP_synth_PdxJ"/>
</dbReference>
<dbReference type="InterPro" id="IPR036130">
    <property type="entry name" value="Pyridoxine-5'_phos_synth"/>
</dbReference>
<dbReference type="NCBIfam" id="TIGR00559">
    <property type="entry name" value="pdxJ"/>
    <property type="match status" value="1"/>
</dbReference>
<dbReference type="NCBIfam" id="NF003624">
    <property type="entry name" value="PRK05265.1-2"/>
    <property type="match status" value="1"/>
</dbReference>
<dbReference type="NCBIfam" id="NF003625">
    <property type="entry name" value="PRK05265.1-3"/>
    <property type="match status" value="1"/>
</dbReference>
<dbReference type="NCBIfam" id="NF003627">
    <property type="entry name" value="PRK05265.1-5"/>
    <property type="match status" value="1"/>
</dbReference>
<dbReference type="PANTHER" id="PTHR30456">
    <property type="entry name" value="PYRIDOXINE 5'-PHOSPHATE SYNTHASE"/>
    <property type="match status" value="1"/>
</dbReference>
<dbReference type="PANTHER" id="PTHR30456:SF0">
    <property type="entry name" value="PYRIDOXINE 5'-PHOSPHATE SYNTHASE"/>
    <property type="match status" value="1"/>
</dbReference>
<dbReference type="Pfam" id="PF03740">
    <property type="entry name" value="PdxJ"/>
    <property type="match status" value="1"/>
</dbReference>
<dbReference type="SUPFAM" id="SSF63892">
    <property type="entry name" value="Pyridoxine 5'-phosphate synthase"/>
    <property type="match status" value="1"/>
</dbReference>
<comment type="function">
    <text evidence="1">Catalyzes the complicated ring closure reaction between the two acyclic compounds 1-deoxy-D-xylulose-5-phosphate (DXP) and 3-amino-2-oxopropyl phosphate (1-amino-acetone-3-phosphate or AAP) to form pyridoxine 5'-phosphate (PNP) and inorganic phosphate.</text>
</comment>
<comment type="catalytic activity">
    <reaction evidence="1">
        <text>3-amino-2-oxopropyl phosphate + 1-deoxy-D-xylulose 5-phosphate = pyridoxine 5'-phosphate + phosphate + 2 H2O + H(+)</text>
        <dbReference type="Rhea" id="RHEA:15265"/>
        <dbReference type="ChEBI" id="CHEBI:15377"/>
        <dbReference type="ChEBI" id="CHEBI:15378"/>
        <dbReference type="ChEBI" id="CHEBI:43474"/>
        <dbReference type="ChEBI" id="CHEBI:57279"/>
        <dbReference type="ChEBI" id="CHEBI:57792"/>
        <dbReference type="ChEBI" id="CHEBI:58589"/>
        <dbReference type="EC" id="2.6.99.2"/>
    </reaction>
</comment>
<comment type="pathway">
    <text evidence="1">Cofactor biosynthesis; pyridoxine 5'-phosphate biosynthesis; pyridoxine 5'-phosphate from D-erythrose 4-phosphate: step 5/5.</text>
</comment>
<comment type="subunit">
    <text evidence="1">Homooctamer; tetramer of dimers.</text>
</comment>
<comment type="subcellular location">
    <subcellularLocation>
        <location evidence="1">Cytoplasm</location>
    </subcellularLocation>
</comment>
<comment type="similarity">
    <text evidence="1">Belongs to the PNP synthase family.</text>
</comment>
<organism>
    <name type="scientific">Rhodopseudomonas palustris (strain TIE-1)</name>
    <dbReference type="NCBI Taxonomy" id="395960"/>
    <lineage>
        <taxon>Bacteria</taxon>
        <taxon>Pseudomonadati</taxon>
        <taxon>Pseudomonadota</taxon>
        <taxon>Alphaproteobacteria</taxon>
        <taxon>Hyphomicrobiales</taxon>
        <taxon>Nitrobacteraceae</taxon>
        <taxon>Rhodopseudomonas</taxon>
    </lineage>
</organism>
<protein>
    <recommendedName>
        <fullName evidence="1">Pyridoxine 5'-phosphate synthase</fullName>
        <shortName evidence="1">PNP synthase</shortName>
        <ecNumber evidence="1">2.6.99.2</ecNumber>
    </recommendedName>
</protein>